<comment type="function">
    <text evidence="1">Protein S19 forms a complex with S13 that binds strongly to the 16S ribosomal RNA.</text>
</comment>
<comment type="similarity">
    <text evidence="1">Belongs to the universal ribosomal protein uS19 family.</text>
</comment>
<gene>
    <name evidence="1" type="primary">rpsS</name>
    <name type="ordered locus">Smal_0760</name>
</gene>
<keyword id="KW-0687">Ribonucleoprotein</keyword>
<keyword id="KW-0689">Ribosomal protein</keyword>
<keyword id="KW-0694">RNA-binding</keyword>
<keyword id="KW-0699">rRNA-binding</keyword>
<feature type="chain" id="PRO_1000128040" description="Small ribosomal subunit protein uS19">
    <location>
        <begin position="1"/>
        <end position="89"/>
    </location>
</feature>
<reference key="1">
    <citation type="submission" date="2008-06" db="EMBL/GenBank/DDBJ databases">
        <title>Complete sequence of Stenotrophomonas maltophilia R551-3.</title>
        <authorList>
            <consortium name="US DOE Joint Genome Institute"/>
            <person name="Lucas S."/>
            <person name="Copeland A."/>
            <person name="Lapidus A."/>
            <person name="Glavina del Rio T."/>
            <person name="Dalin E."/>
            <person name="Tice H."/>
            <person name="Pitluck S."/>
            <person name="Chain P."/>
            <person name="Malfatti S."/>
            <person name="Shin M."/>
            <person name="Vergez L."/>
            <person name="Lang D."/>
            <person name="Schmutz J."/>
            <person name="Larimer F."/>
            <person name="Land M."/>
            <person name="Hauser L."/>
            <person name="Kyrpides N."/>
            <person name="Mikhailova N."/>
            <person name="Taghavi S."/>
            <person name="Monchy S."/>
            <person name="Newman L."/>
            <person name="Vangronsveld J."/>
            <person name="van der Lelie D."/>
            <person name="Richardson P."/>
        </authorList>
    </citation>
    <scope>NUCLEOTIDE SEQUENCE [LARGE SCALE GENOMIC DNA]</scope>
    <source>
        <strain>R551-3</strain>
    </source>
</reference>
<dbReference type="EMBL" id="CP001111">
    <property type="protein sequence ID" value="ACF50465.1"/>
    <property type="molecule type" value="Genomic_DNA"/>
</dbReference>
<dbReference type="RefSeq" id="WP_004145340.1">
    <property type="nucleotide sequence ID" value="NC_011071.1"/>
</dbReference>
<dbReference type="SMR" id="B4SKW7"/>
<dbReference type="STRING" id="391008.Smal_0760"/>
<dbReference type="GeneID" id="97225736"/>
<dbReference type="KEGG" id="smt:Smal_0760"/>
<dbReference type="eggNOG" id="COG0185">
    <property type="taxonomic scope" value="Bacteria"/>
</dbReference>
<dbReference type="HOGENOM" id="CLU_144911_0_1_6"/>
<dbReference type="OrthoDB" id="9797833at2"/>
<dbReference type="Proteomes" id="UP000001867">
    <property type="component" value="Chromosome"/>
</dbReference>
<dbReference type="GO" id="GO:0005737">
    <property type="term" value="C:cytoplasm"/>
    <property type="evidence" value="ECO:0007669"/>
    <property type="project" value="UniProtKB-ARBA"/>
</dbReference>
<dbReference type="GO" id="GO:0015935">
    <property type="term" value="C:small ribosomal subunit"/>
    <property type="evidence" value="ECO:0007669"/>
    <property type="project" value="InterPro"/>
</dbReference>
<dbReference type="GO" id="GO:0019843">
    <property type="term" value="F:rRNA binding"/>
    <property type="evidence" value="ECO:0007669"/>
    <property type="project" value="UniProtKB-UniRule"/>
</dbReference>
<dbReference type="GO" id="GO:0003735">
    <property type="term" value="F:structural constituent of ribosome"/>
    <property type="evidence" value="ECO:0007669"/>
    <property type="project" value="InterPro"/>
</dbReference>
<dbReference type="GO" id="GO:0000028">
    <property type="term" value="P:ribosomal small subunit assembly"/>
    <property type="evidence" value="ECO:0007669"/>
    <property type="project" value="TreeGrafter"/>
</dbReference>
<dbReference type="GO" id="GO:0006412">
    <property type="term" value="P:translation"/>
    <property type="evidence" value="ECO:0007669"/>
    <property type="project" value="UniProtKB-UniRule"/>
</dbReference>
<dbReference type="FunFam" id="3.30.860.10:FF:000001">
    <property type="entry name" value="30S ribosomal protein S19"/>
    <property type="match status" value="1"/>
</dbReference>
<dbReference type="Gene3D" id="3.30.860.10">
    <property type="entry name" value="30s Ribosomal Protein S19, Chain A"/>
    <property type="match status" value="1"/>
</dbReference>
<dbReference type="HAMAP" id="MF_00531">
    <property type="entry name" value="Ribosomal_uS19"/>
    <property type="match status" value="1"/>
</dbReference>
<dbReference type="InterPro" id="IPR002222">
    <property type="entry name" value="Ribosomal_uS19"/>
</dbReference>
<dbReference type="InterPro" id="IPR005732">
    <property type="entry name" value="Ribosomal_uS19_bac-type"/>
</dbReference>
<dbReference type="InterPro" id="IPR020934">
    <property type="entry name" value="Ribosomal_uS19_CS"/>
</dbReference>
<dbReference type="InterPro" id="IPR023575">
    <property type="entry name" value="Ribosomal_uS19_SF"/>
</dbReference>
<dbReference type="NCBIfam" id="TIGR01050">
    <property type="entry name" value="rpsS_bact"/>
    <property type="match status" value="1"/>
</dbReference>
<dbReference type="PANTHER" id="PTHR11880">
    <property type="entry name" value="RIBOSOMAL PROTEIN S19P FAMILY MEMBER"/>
    <property type="match status" value="1"/>
</dbReference>
<dbReference type="PANTHER" id="PTHR11880:SF8">
    <property type="entry name" value="SMALL RIBOSOMAL SUBUNIT PROTEIN US19M"/>
    <property type="match status" value="1"/>
</dbReference>
<dbReference type="Pfam" id="PF00203">
    <property type="entry name" value="Ribosomal_S19"/>
    <property type="match status" value="1"/>
</dbReference>
<dbReference type="PIRSF" id="PIRSF002144">
    <property type="entry name" value="Ribosomal_S19"/>
    <property type="match status" value="1"/>
</dbReference>
<dbReference type="PRINTS" id="PR00975">
    <property type="entry name" value="RIBOSOMALS19"/>
</dbReference>
<dbReference type="SUPFAM" id="SSF54570">
    <property type="entry name" value="Ribosomal protein S19"/>
    <property type="match status" value="1"/>
</dbReference>
<dbReference type="PROSITE" id="PS00323">
    <property type="entry name" value="RIBOSOMAL_S19"/>
    <property type="match status" value="1"/>
</dbReference>
<sequence>MARSLKKGPFVDHHLVAKVAAAAGSKRPIKTWSRRSMILPDMVGVTIAVHNGKNHIPVLVNENMVGHKLGEFAITRTFKGHGGDKKSGK</sequence>
<organism>
    <name type="scientific">Stenotrophomonas maltophilia (strain R551-3)</name>
    <dbReference type="NCBI Taxonomy" id="391008"/>
    <lineage>
        <taxon>Bacteria</taxon>
        <taxon>Pseudomonadati</taxon>
        <taxon>Pseudomonadota</taxon>
        <taxon>Gammaproteobacteria</taxon>
        <taxon>Lysobacterales</taxon>
        <taxon>Lysobacteraceae</taxon>
        <taxon>Stenotrophomonas</taxon>
        <taxon>Stenotrophomonas maltophilia group</taxon>
    </lineage>
</organism>
<proteinExistence type="inferred from homology"/>
<evidence type="ECO:0000255" key="1">
    <source>
        <dbReference type="HAMAP-Rule" id="MF_00531"/>
    </source>
</evidence>
<evidence type="ECO:0000305" key="2"/>
<accession>B4SKW7</accession>
<protein>
    <recommendedName>
        <fullName evidence="1">Small ribosomal subunit protein uS19</fullName>
    </recommendedName>
    <alternativeName>
        <fullName evidence="2">30S ribosomal protein S19</fullName>
    </alternativeName>
</protein>
<name>RS19_STRM5</name>